<organism>
    <name type="scientific">Leptospira borgpetersenii serovar Hardjo-bovis (strain L550)</name>
    <dbReference type="NCBI Taxonomy" id="355276"/>
    <lineage>
        <taxon>Bacteria</taxon>
        <taxon>Pseudomonadati</taxon>
        <taxon>Spirochaetota</taxon>
        <taxon>Spirochaetia</taxon>
        <taxon>Leptospirales</taxon>
        <taxon>Leptospiraceae</taxon>
        <taxon>Leptospira</taxon>
    </lineage>
</organism>
<keyword id="KW-0560">Oxidoreductase</keyword>
<keyword id="KW-0819">tRNA processing</keyword>
<comment type="function">
    <text evidence="1">Catalyzes oxygen-dependent 5-hydroxyuridine (ho5U) modification at position 34 in tRNAs.</text>
</comment>
<comment type="catalytic activity">
    <reaction evidence="1">
        <text>uridine(34) in tRNA + AH2 + O2 = 5-hydroxyuridine(34) in tRNA + A + H2O</text>
        <dbReference type="Rhea" id="RHEA:64224"/>
        <dbReference type="Rhea" id="RHEA-COMP:11727"/>
        <dbReference type="Rhea" id="RHEA-COMP:13381"/>
        <dbReference type="ChEBI" id="CHEBI:13193"/>
        <dbReference type="ChEBI" id="CHEBI:15377"/>
        <dbReference type="ChEBI" id="CHEBI:15379"/>
        <dbReference type="ChEBI" id="CHEBI:17499"/>
        <dbReference type="ChEBI" id="CHEBI:65315"/>
        <dbReference type="ChEBI" id="CHEBI:136877"/>
    </reaction>
</comment>
<comment type="similarity">
    <text evidence="1">Belongs to the TrhO family.</text>
</comment>
<proteinExistence type="inferred from homology"/>
<accession>Q054K1</accession>
<evidence type="ECO:0000255" key="1">
    <source>
        <dbReference type="HAMAP-Rule" id="MF_00469"/>
    </source>
</evidence>
<dbReference type="EC" id="1.14.-.-" evidence="1"/>
<dbReference type="EMBL" id="CP000348">
    <property type="protein sequence ID" value="ABJ78244.1"/>
    <property type="molecule type" value="Genomic_DNA"/>
</dbReference>
<dbReference type="RefSeq" id="WP_011669576.1">
    <property type="nucleotide sequence ID" value="NC_008508.1"/>
</dbReference>
<dbReference type="SMR" id="Q054K1"/>
<dbReference type="KEGG" id="lbl:LBL_0674"/>
<dbReference type="HOGENOM" id="CLU_038878_1_1_12"/>
<dbReference type="GO" id="GO:0016705">
    <property type="term" value="F:oxidoreductase activity, acting on paired donors, with incorporation or reduction of molecular oxygen"/>
    <property type="evidence" value="ECO:0007669"/>
    <property type="project" value="UniProtKB-UniRule"/>
</dbReference>
<dbReference type="GO" id="GO:0006400">
    <property type="term" value="P:tRNA modification"/>
    <property type="evidence" value="ECO:0007669"/>
    <property type="project" value="UniProtKB-UniRule"/>
</dbReference>
<dbReference type="CDD" id="cd01518">
    <property type="entry name" value="RHOD_YceA"/>
    <property type="match status" value="1"/>
</dbReference>
<dbReference type="Gene3D" id="3.30.70.100">
    <property type="match status" value="1"/>
</dbReference>
<dbReference type="Gene3D" id="3.40.250.10">
    <property type="entry name" value="Rhodanese-like domain"/>
    <property type="match status" value="1"/>
</dbReference>
<dbReference type="HAMAP" id="MF_00469">
    <property type="entry name" value="TrhO"/>
    <property type="match status" value="1"/>
</dbReference>
<dbReference type="InterPro" id="IPR001763">
    <property type="entry name" value="Rhodanese-like_dom"/>
</dbReference>
<dbReference type="InterPro" id="IPR036873">
    <property type="entry name" value="Rhodanese-like_dom_sf"/>
</dbReference>
<dbReference type="InterPro" id="IPR022111">
    <property type="entry name" value="Rhodanese_C"/>
</dbReference>
<dbReference type="InterPro" id="IPR020936">
    <property type="entry name" value="TrhO"/>
</dbReference>
<dbReference type="InterPro" id="IPR040503">
    <property type="entry name" value="TRHO_N"/>
</dbReference>
<dbReference type="NCBIfam" id="NF001133">
    <property type="entry name" value="PRK00142.1-1"/>
    <property type="match status" value="1"/>
</dbReference>
<dbReference type="NCBIfam" id="NF001135">
    <property type="entry name" value="PRK00142.1-3"/>
    <property type="match status" value="1"/>
</dbReference>
<dbReference type="PANTHER" id="PTHR43846:SF1">
    <property type="entry name" value="TRNA URIDINE(34) HYDROXYLASE"/>
    <property type="match status" value="1"/>
</dbReference>
<dbReference type="PANTHER" id="PTHR43846">
    <property type="entry name" value="UPF0176 PROTEIN YCEA"/>
    <property type="match status" value="1"/>
</dbReference>
<dbReference type="Pfam" id="PF00581">
    <property type="entry name" value="Rhodanese"/>
    <property type="match status" value="1"/>
</dbReference>
<dbReference type="Pfam" id="PF12368">
    <property type="entry name" value="Rhodanese_C"/>
    <property type="match status" value="1"/>
</dbReference>
<dbReference type="Pfam" id="PF17773">
    <property type="entry name" value="UPF0176_N"/>
    <property type="match status" value="1"/>
</dbReference>
<dbReference type="SMART" id="SM00450">
    <property type="entry name" value="RHOD"/>
    <property type="match status" value="1"/>
</dbReference>
<dbReference type="SUPFAM" id="SSF52821">
    <property type="entry name" value="Rhodanese/Cell cycle control phosphatase"/>
    <property type="match status" value="1"/>
</dbReference>
<dbReference type="PROSITE" id="PS50206">
    <property type="entry name" value="RHODANESE_3"/>
    <property type="match status" value="1"/>
</dbReference>
<sequence>MANRGDLQKKTHTKKRPLHNIYGKEILSKRLEAENFPRTTLSFYRYVILENVQELRNRLYVEWEALGVLGRIYVAREGINAQLSIPSHNLNSFKENLNSRIQFKDMLLKIAVEDDHRSFLKLDLKVRNKIVADGLNDDAFDVTNVGKHLSAEEFNRCMEDKNSIVVDVRNHYESEIGHFENAILPQSDTFREELQILLELLNGKEDHKILMYCTGGIRCEKASAWLKHHGFKDVNQLHGGIISYAHEISQKGLESKFRGKNFVFDGRLQETIGNEIISVCHQCGKKSDRHINCSNPGCHILFIQCDDCSEKFEGCCTEECKTVLHLPKEKQKEIRKGKSNENRFFTKSKIRPKISELYRNRKPFETA</sequence>
<protein>
    <recommendedName>
        <fullName evidence="1">tRNA uridine(34) hydroxylase</fullName>
        <ecNumber evidence="1">1.14.-.-</ecNumber>
    </recommendedName>
    <alternativeName>
        <fullName evidence="1">tRNA hydroxylation protein O</fullName>
    </alternativeName>
</protein>
<feature type="chain" id="PRO_1000013748" description="tRNA uridine(34) hydroxylase">
    <location>
        <begin position="1"/>
        <end position="367"/>
    </location>
</feature>
<feature type="domain" description="Rhodanese" evidence="1">
    <location>
        <begin position="159"/>
        <end position="249"/>
    </location>
</feature>
<feature type="active site" description="Cysteine persulfide intermediate" evidence="1">
    <location>
        <position position="213"/>
    </location>
</feature>
<gene>
    <name evidence="1" type="primary">trhO</name>
    <name type="ordered locus">LBL_0674</name>
</gene>
<reference key="1">
    <citation type="journal article" date="2006" name="Proc. Natl. Acad. Sci. U.S.A.">
        <title>Genome reduction in Leptospira borgpetersenii reflects limited transmission potential.</title>
        <authorList>
            <person name="Bulach D.M."/>
            <person name="Zuerner R.L."/>
            <person name="Wilson P."/>
            <person name="Seemann T."/>
            <person name="McGrath A."/>
            <person name="Cullen P.A."/>
            <person name="Davis J."/>
            <person name="Johnson M."/>
            <person name="Kuczek E."/>
            <person name="Alt D.P."/>
            <person name="Peterson-Burch B."/>
            <person name="Coppel R.L."/>
            <person name="Rood J.I."/>
            <person name="Davies J.K."/>
            <person name="Adler B."/>
        </authorList>
    </citation>
    <scope>NUCLEOTIDE SEQUENCE [LARGE SCALE GENOMIC DNA]</scope>
    <source>
        <strain>L550</strain>
    </source>
</reference>
<name>TRHO_LEPBL</name>